<comment type="function">
    <text evidence="1">Involved in the biosynthesis of the arabinogalactan (AG) region of the mycolylarabinogalactan-peptidoglycan (mAGP) complex, an essential component of the mycobacterial cell wall. Catalyzes the addition of an arabinofuranosyl (Araf) residue from the sugar donor beta-D-arabinofuranosyl-1-monophosphoryldecaprenol (DPA) on the C-3 of an alpha-(1-&gt;5)-linked Araf from the arabinan backbone of AG.</text>
</comment>
<comment type="catalytic activity">
    <reaction>
        <text>Adds an alpha-D-arabinofuranosyl group from trans,octacis-decaprenylphospho-beta-D-arabinofuranose at the 3-O-position of an alpha-(1-&gt;5)-arabinofuranan chain attached to a beta-(1-&gt;5)-galactofuranan chain.</text>
        <dbReference type="EC" id="2.4.2.47"/>
    </reaction>
</comment>
<comment type="pathway">
    <text>Cell wall biogenesis; cell wall polysaccharide biosynthesis.</text>
</comment>
<comment type="subcellular location">
    <subcellularLocation>
        <location evidence="2">Cell membrane</location>
        <topology evidence="2">Multi-pass membrane protein</topology>
    </subcellularLocation>
</comment>
<comment type="similarity">
    <text evidence="3">Belongs to the glycosyltransferase 87 family.</text>
</comment>
<keyword id="KW-1003">Cell membrane</keyword>
<keyword id="KW-0961">Cell wall biogenesis/degradation</keyword>
<keyword id="KW-0328">Glycosyltransferase</keyword>
<keyword id="KW-0472">Membrane</keyword>
<keyword id="KW-1185">Reference proteome</keyword>
<keyword id="KW-0808">Transferase</keyword>
<keyword id="KW-0812">Transmembrane</keyword>
<keyword id="KW-1133">Transmembrane helix</keyword>
<reference key="1">
    <citation type="journal article" date="2002" name="J. Bacteriol.">
        <title>Whole-genome comparison of Mycobacterium tuberculosis clinical and laboratory strains.</title>
        <authorList>
            <person name="Fleischmann R.D."/>
            <person name="Alland D."/>
            <person name="Eisen J.A."/>
            <person name="Carpenter L."/>
            <person name="White O."/>
            <person name="Peterson J.D."/>
            <person name="DeBoy R.T."/>
            <person name="Dodson R.J."/>
            <person name="Gwinn M.L."/>
            <person name="Haft D.H."/>
            <person name="Hickey E.K."/>
            <person name="Kolonay J.F."/>
            <person name="Nelson W.C."/>
            <person name="Umayam L.A."/>
            <person name="Ermolaeva M.D."/>
            <person name="Salzberg S.L."/>
            <person name="Delcher A."/>
            <person name="Utterback T.R."/>
            <person name="Weidman J.F."/>
            <person name="Khouri H.M."/>
            <person name="Gill J."/>
            <person name="Mikula A."/>
            <person name="Bishai W."/>
            <person name="Jacobs W.R. Jr."/>
            <person name="Venter J.C."/>
            <person name="Fraser C.M."/>
        </authorList>
    </citation>
    <scope>NUCLEOTIDE SEQUENCE [LARGE SCALE GENOMIC DNA]</scope>
    <source>
        <strain>CDC 1551 / Oshkosh</strain>
    </source>
</reference>
<proteinExistence type="inferred from homology"/>
<sequence length="433" mass="48915">MYGALVTAADSIRTGLGASLLAGFRPRTGAPSTATILRSALWPAAVLSVLHRSIVLTTNGNITDDFKPVYRAVLNFRRGWDIYNEHFDYVDPHYLYPPGGTLLMAPFGYLPFAPSRYLFISINTAAILVAAYLLLRMFNFTLTSVAAPALILAMFATETVTNTLVFTNINGCILLLEVLFLRWLLDGRASRQWCGGLAIGLTLVLKPLLGPLLLLPLLNRQWRALVAAVVVPVVVNVAALPLVSDPMSFFTRTLPYILGTRDYFNSSILGNGVYFGLPTWLILFLRILFTAITFGALWLLYRYYRTGDPLFWFTTSSGVLLLWSWLVMSLAQGYYSMMLFPFLMTVVLPNSVIRNWPAWLGVYGFMTLDRWLLFNWMRWGRALEYLKITYGWSLLLIVTFTVLYFRYLDAKADNRLDGGIDPAWLTPEREGQR</sequence>
<gene>
    <name type="primary">aftC</name>
    <name type="ordered locus">MT2747</name>
</gene>
<feature type="chain" id="PRO_0000427215" description="Alpha-(1-&gt;3)-arabinofuranosyltransferase">
    <location>
        <begin position="1"/>
        <end position="433"/>
    </location>
</feature>
<feature type="transmembrane region" description="Helical" evidence="2">
    <location>
        <begin position="118"/>
        <end position="138"/>
    </location>
</feature>
<feature type="transmembrane region" description="Helical" evidence="2">
    <location>
        <begin position="140"/>
        <end position="160"/>
    </location>
</feature>
<feature type="transmembrane region" description="Helical" evidence="2">
    <location>
        <begin position="164"/>
        <end position="184"/>
    </location>
</feature>
<feature type="transmembrane region" description="Helical" evidence="2">
    <location>
        <begin position="197"/>
        <end position="217"/>
    </location>
</feature>
<feature type="transmembrane region" description="Helical" evidence="2">
    <location>
        <begin position="224"/>
        <end position="244"/>
    </location>
</feature>
<feature type="transmembrane region" description="Helical" evidence="2">
    <location>
        <begin position="280"/>
        <end position="300"/>
    </location>
</feature>
<feature type="transmembrane region" description="Helical" evidence="2">
    <location>
        <begin position="310"/>
        <end position="330"/>
    </location>
</feature>
<feature type="transmembrane region" description="Helical" evidence="2">
    <location>
        <begin position="333"/>
        <end position="353"/>
    </location>
</feature>
<feature type="transmembrane region" description="Helical" evidence="2">
    <location>
        <begin position="356"/>
        <end position="376"/>
    </location>
</feature>
<feature type="transmembrane region" description="Helical" evidence="2">
    <location>
        <begin position="385"/>
        <end position="405"/>
    </location>
</feature>
<protein>
    <recommendedName>
        <fullName>Alpha-(1-&gt;3)-arabinofuranosyltransferase</fullName>
        <ecNumber>2.4.2.47</ecNumber>
    </recommendedName>
    <alternativeName>
        <fullName>Arabinofuranan 3-O-arabinosyltransferase</fullName>
    </alternativeName>
    <alternativeName>
        <fullName>Arabinofuranosyltransferase C</fullName>
    </alternativeName>
</protein>
<name>AFTC_MYCTO</name>
<dbReference type="EC" id="2.4.2.47"/>
<dbReference type="EMBL" id="AE000516">
    <property type="protein sequence ID" value="AAK47062.1"/>
    <property type="molecule type" value="Genomic_DNA"/>
</dbReference>
<dbReference type="PIR" id="E70968">
    <property type="entry name" value="E70968"/>
</dbReference>
<dbReference type="KEGG" id="mtc:MT2747"/>
<dbReference type="PATRIC" id="fig|83331.31.peg.2958"/>
<dbReference type="HOGENOM" id="CLU_055106_0_0_11"/>
<dbReference type="UniPathway" id="UPA00963"/>
<dbReference type="Proteomes" id="UP000001020">
    <property type="component" value="Chromosome"/>
</dbReference>
<dbReference type="GO" id="GO:0005886">
    <property type="term" value="C:plasma membrane"/>
    <property type="evidence" value="ECO:0007669"/>
    <property type="project" value="UniProtKB-SubCell"/>
</dbReference>
<dbReference type="GO" id="GO:0016758">
    <property type="term" value="F:hexosyltransferase activity"/>
    <property type="evidence" value="ECO:0007669"/>
    <property type="project" value="InterPro"/>
</dbReference>
<dbReference type="GO" id="GO:0045227">
    <property type="term" value="P:capsule polysaccharide biosynthetic process"/>
    <property type="evidence" value="ECO:0007669"/>
    <property type="project" value="UniProtKB-UniPathway"/>
</dbReference>
<dbReference type="GO" id="GO:0071555">
    <property type="term" value="P:cell wall organization"/>
    <property type="evidence" value="ECO:0007669"/>
    <property type="project" value="UniProtKB-KW"/>
</dbReference>
<dbReference type="InterPro" id="IPR018584">
    <property type="entry name" value="GT87"/>
</dbReference>
<dbReference type="Pfam" id="PF09594">
    <property type="entry name" value="GT87"/>
    <property type="match status" value="1"/>
</dbReference>
<organism>
    <name type="scientific">Mycobacterium tuberculosis (strain CDC 1551 / Oshkosh)</name>
    <dbReference type="NCBI Taxonomy" id="83331"/>
    <lineage>
        <taxon>Bacteria</taxon>
        <taxon>Bacillati</taxon>
        <taxon>Actinomycetota</taxon>
        <taxon>Actinomycetes</taxon>
        <taxon>Mycobacteriales</taxon>
        <taxon>Mycobacteriaceae</taxon>
        <taxon>Mycobacterium</taxon>
        <taxon>Mycobacterium tuberculosis complex</taxon>
    </lineage>
</organism>
<evidence type="ECO:0000250" key="1"/>
<evidence type="ECO:0000255" key="2"/>
<evidence type="ECO:0000305" key="3"/>
<accession>P9WMZ6</accession>
<accession>F2GLI3</accession>
<accession>L0TAJ6</accession>
<accession>P71970</accession>
<accession>Q7D6S9</accession>